<accession>Q9D131</accession>
<accession>Q3TM17</accession>
<accession>Q3TYP3</accession>
<accession>Q4FK47</accession>
<accession>Q8K0A6</accession>
<accession>Q9D589</accession>
<accession>Q9JHT0</accession>
<proteinExistence type="evidence at protein level"/>
<name>CFA68_MOUSE</name>
<comment type="function">
    <text evidence="4">Microtubule inner protein (MIP) part of the dynein-decorated doublet microtubules (DMTs) in cilia axoneme, which is required for motile cilia beating.</text>
</comment>
<comment type="subunit">
    <text evidence="4">Microtubule inner protein component of sperm flagellar doublet microtubules.</text>
</comment>
<comment type="subcellular location">
    <subcellularLocation>
        <location evidence="1">Cytoplasm</location>
        <location evidence="1">Cytoskeleton</location>
        <location evidence="1">Cilium axoneme</location>
    </subcellularLocation>
    <subcellularLocation>
        <location evidence="4">Cytoplasm</location>
        <location evidence="4">Cytoskeleton</location>
        <location evidence="4">Flagellum axoneme</location>
    </subcellularLocation>
    <subcellularLocation>
        <location evidence="1">Nucleus</location>
    </subcellularLocation>
    <subcellularLocation>
        <location evidence="1">Cell projection</location>
        <location evidence="1">Cilium</location>
    </subcellularLocation>
</comment>
<comment type="alternative products">
    <event type="alternative splicing"/>
    <isoform>
        <id>Q9D131-1</id>
        <name>1</name>
        <sequence type="displayed"/>
    </isoform>
    <isoform>
        <id>Q9D131-2</id>
        <name>2</name>
        <sequence type="described" ref="VSP_027584"/>
    </isoform>
</comment>
<comment type="similarity">
    <text evidence="6">Belongs to the CFAP68 family.</text>
</comment>
<dbReference type="EMBL" id="AJ250230">
    <property type="protein sequence ID" value="CAB96546.1"/>
    <property type="molecule type" value="mRNA"/>
</dbReference>
<dbReference type="EMBL" id="AK004016">
    <property type="protein sequence ID" value="BAB23127.1"/>
    <property type="molecule type" value="mRNA"/>
</dbReference>
<dbReference type="EMBL" id="AK015671">
    <property type="protein sequence ID" value="BAB29923.1"/>
    <property type="molecule type" value="mRNA"/>
</dbReference>
<dbReference type="EMBL" id="AK043513">
    <property type="protein sequence ID" value="BAC31564.1"/>
    <property type="molecule type" value="mRNA"/>
</dbReference>
<dbReference type="EMBL" id="AK158460">
    <property type="protein sequence ID" value="BAE34519.1"/>
    <property type="molecule type" value="mRNA"/>
</dbReference>
<dbReference type="EMBL" id="AK166202">
    <property type="protein sequence ID" value="BAE38625.1"/>
    <property type="molecule type" value="mRNA"/>
</dbReference>
<dbReference type="EMBL" id="CT010205">
    <property type="protein sequence ID" value="CAJ18413.1"/>
    <property type="molecule type" value="mRNA"/>
</dbReference>
<dbReference type="EMBL" id="BC032012">
    <property type="status" value="NOT_ANNOTATED_CDS"/>
    <property type="molecule type" value="mRNA"/>
</dbReference>
<dbReference type="CCDS" id="CCDS23173.1">
    <molecule id="Q9D131-1"/>
</dbReference>
<dbReference type="CCDS" id="CCDS80996.1">
    <molecule id="Q9D131-2"/>
</dbReference>
<dbReference type="RefSeq" id="NP_001298002.1">
    <molecule id="Q9D131-2"/>
    <property type="nucleotide sequence ID" value="NM_001311073.2"/>
</dbReference>
<dbReference type="RefSeq" id="NP_075972.2">
    <molecule id="Q9D131-1"/>
    <property type="nucleotide sequence ID" value="NM_023483.3"/>
</dbReference>
<dbReference type="PDB" id="8IYJ">
    <property type="method" value="EM"/>
    <property type="resolution" value="3.50 A"/>
    <property type="chains" value="I1=1-166"/>
</dbReference>
<dbReference type="PDBsum" id="8IYJ"/>
<dbReference type="EMDB" id="EMD-35823"/>
<dbReference type="SMR" id="Q9D131"/>
<dbReference type="FunCoup" id="Q9D131">
    <property type="interactions" value="217"/>
</dbReference>
<dbReference type="STRING" id="10090.ENSMUSP00000046890"/>
<dbReference type="iPTMnet" id="Q9D131"/>
<dbReference type="PhosphoSitePlus" id="Q9D131"/>
<dbReference type="PaxDb" id="10090-ENSMUSP00000041803"/>
<dbReference type="Antibodypedia" id="51443">
    <property type="antibodies" value="110 antibodies from 16 providers"/>
</dbReference>
<dbReference type="DNASU" id="68721"/>
<dbReference type="Ensembl" id="ENSMUST00000042468.9">
    <molecule id="Q9D131-1"/>
    <property type="protein sequence ID" value="ENSMUSP00000041803.3"/>
    <property type="gene ID" value="ENSMUSG00000037971.11"/>
</dbReference>
<dbReference type="Ensembl" id="ENSMUST00000042576.11">
    <molecule id="Q9D131-2"/>
    <property type="protein sequence ID" value="ENSMUSP00000046890.5"/>
    <property type="gene ID" value="ENSMUSG00000037971.11"/>
</dbReference>
<dbReference type="GeneID" id="68721"/>
<dbReference type="KEGG" id="mmu:68721"/>
<dbReference type="UCSC" id="uc009pko.1">
    <molecule id="Q9D131-2"/>
    <property type="organism name" value="mouse"/>
</dbReference>
<dbReference type="UCSC" id="uc009pkp.1">
    <molecule id="Q9D131-1"/>
    <property type="organism name" value="mouse"/>
</dbReference>
<dbReference type="AGR" id="MGI:1915971"/>
<dbReference type="CTD" id="64776"/>
<dbReference type="MGI" id="MGI:1915971">
    <property type="gene designation" value="Cfap68"/>
</dbReference>
<dbReference type="VEuPathDB" id="HostDB:ENSMUSG00000037971"/>
<dbReference type="eggNOG" id="ENOG502S5NG">
    <property type="taxonomic scope" value="Eukaryota"/>
</dbReference>
<dbReference type="GeneTree" id="ENSGT00390000002905"/>
<dbReference type="HOGENOM" id="CLU_117702_0_0_1"/>
<dbReference type="InParanoid" id="Q9D131"/>
<dbReference type="OMA" id="QYDHYFE"/>
<dbReference type="OrthoDB" id="19285at9989"/>
<dbReference type="PhylomeDB" id="Q9D131"/>
<dbReference type="TreeFam" id="TF329225"/>
<dbReference type="BioGRID-ORCS" id="68721">
    <property type="hits" value="1 hit in 78 CRISPR screens"/>
</dbReference>
<dbReference type="PRO" id="PR:Q9D131"/>
<dbReference type="Proteomes" id="UP000000589">
    <property type="component" value="Chromosome 9"/>
</dbReference>
<dbReference type="RNAct" id="Q9D131">
    <property type="molecule type" value="protein"/>
</dbReference>
<dbReference type="Bgee" id="ENSMUSG00000037971">
    <property type="expression patterns" value="Expressed in skin of snout and 261 other cell types or tissues"/>
</dbReference>
<dbReference type="ExpressionAtlas" id="Q9D131">
    <property type="expression patterns" value="baseline and differential"/>
</dbReference>
<dbReference type="GO" id="GO:0160111">
    <property type="term" value="C:axonemal A tubule inner sheath"/>
    <property type="evidence" value="ECO:0000314"/>
    <property type="project" value="MGI"/>
</dbReference>
<dbReference type="GO" id="GO:0005930">
    <property type="term" value="C:axoneme"/>
    <property type="evidence" value="ECO:0000250"/>
    <property type="project" value="UniProtKB"/>
</dbReference>
<dbReference type="GO" id="GO:0005654">
    <property type="term" value="C:nucleoplasm"/>
    <property type="evidence" value="ECO:0007669"/>
    <property type="project" value="Ensembl"/>
</dbReference>
<dbReference type="GO" id="GO:0036126">
    <property type="term" value="C:sperm flagellum"/>
    <property type="evidence" value="ECO:0000314"/>
    <property type="project" value="UniProtKB"/>
</dbReference>
<dbReference type="GO" id="GO:0030317">
    <property type="term" value="P:flagellated sperm motility"/>
    <property type="evidence" value="ECO:0000314"/>
    <property type="project" value="UniProtKB"/>
</dbReference>
<dbReference type="InterPro" id="IPR009524">
    <property type="entry name" value="CFAP68"/>
</dbReference>
<dbReference type="InterPro" id="IPR037662">
    <property type="entry name" value="CFAP68/107"/>
</dbReference>
<dbReference type="PANTHER" id="PTHR31180">
    <property type="entry name" value="CILIA- AND FLAGELLA-ASSOCIATED PROTEIN 107-RELATED"/>
    <property type="match status" value="1"/>
</dbReference>
<dbReference type="PANTHER" id="PTHR31180:SF3">
    <property type="entry name" value="EXPRESSED SEQUENCE EH456644"/>
    <property type="match status" value="1"/>
</dbReference>
<dbReference type="Pfam" id="PF06608">
    <property type="entry name" value="CFAP68"/>
    <property type="match status" value="1"/>
</dbReference>
<sequence length="166" mass="19527">MAVSCSLNHSTYLQRQNLVCYLRNPHYGSLIYADGHGEVWTDWNDMSKFLQYGWRCTTNENSYSNRTLVGNWNQERYDLKNIVKPKPLPSQFGHAFETTYDANYSRKKPQSTHRFKREPHWFPGHQPELDPPHYKCTAKSTYMTNYSEPQPTHYSCCVYDPSVSQS</sequence>
<gene>
    <name type="primary">Cfap68</name>
</gene>
<reference key="1">
    <citation type="journal article" date="2000" name="Biochem. Biophys. Res. Commun.">
        <title>Characterization of five novel human genes in the 11q13-q22 region.</title>
        <authorList>
            <person name="O'Brien K.P."/>
            <person name="Tapia-Paez I."/>
            <person name="Staahle-Baeckdahl M."/>
            <person name="Kedra D."/>
            <person name="Dumanski J.P."/>
        </authorList>
    </citation>
    <scope>NUCLEOTIDE SEQUENCE [MRNA] (ISOFORM 1)</scope>
</reference>
<reference key="2">
    <citation type="journal article" date="2005" name="Science">
        <title>The transcriptional landscape of the mammalian genome.</title>
        <authorList>
            <person name="Carninci P."/>
            <person name="Kasukawa T."/>
            <person name="Katayama S."/>
            <person name="Gough J."/>
            <person name="Frith M.C."/>
            <person name="Maeda N."/>
            <person name="Oyama R."/>
            <person name="Ravasi T."/>
            <person name="Lenhard B."/>
            <person name="Wells C."/>
            <person name="Kodzius R."/>
            <person name="Shimokawa K."/>
            <person name="Bajic V.B."/>
            <person name="Brenner S.E."/>
            <person name="Batalov S."/>
            <person name="Forrest A.R."/>
            <person name="Zavolan M."/>
            <person name="Davis M.J."/>
            <person name="Wilming L.G."/>
            <person name="Aidinis V."/>
            <person name="Allen J.E."/>
            <person name="Ambesi-Impiombato A."/>
            <person name="Apweiler R."/>
            <person name="Aturaliya R.N."/>
            <person name="Bailey T.L."/>
            <person name="Bansal M."/>
            <person name="Baxter L."/>
            <person name="Beisel K.W."/>
            <person name="Bersano T."/>
            <person name="Bono H."/>
            <person name="Chalk A.M."/>
            <person name="Chiu K.P."/>
            <person name="Choudhary V."/>
            <person name="Christoffels A."/>
            <person name="Clutterbuck D.R."/>
            <person name="Crowe M.L."/>
            <person name="Dalla E."/>
            <person name="Dalrymple B.P."/>
            <person name="de Bono B."/>
            <person name="Della Gatta G."/>
            <person name="di Bernardo D."/>
            <person name="Down T."/>
            <person name="Engstrom P."/>
            <person name="Fagiolini M."/>
            <person name="Faulkner G."/>
            <person name="Fletcher C.F."/>
            <person name="Fukushima T."/>
            <person name="Furuno M."/>
            <person name="Futaki S."/>
            <person name="Gariboldi M."/>
            <person name="Georgii-Hemming P."/>
            <person name="Gingeras T.R."/>
            <person name="Gojobori T."/>
            <person name="Green R.E."/>
            <person name="Gustincich S."/>
            <person name="Harbers M."/>
            <person name="Hayashi Y."/>
            <person name="Hensch T.K."/>
            <person name="Hirokawa N."/>
            <person name="Hill D."/>
            <person name="Huminiecki L."/>
            <person name="Iacono M."/>
            <person name="Ikeo K."/>
            <person name="Iwama A."/>
            <person name="Ishikawa T."/>
            <person name="Jakt M."/>
            <person name="Kanapin A."/>
            <person name="Katoh M."/>
            <person name="Kawasawa Y."/>
            <person name="Kelso J."/>
            <person name="Kitamura H."/>
            <person name="Kitano H."/>
            <person name="Kollias G."/>
            <person name="Krishnan S.P."/>
            <person name="Kruger A."/>
            <person name="Kummerfeld S.K."/>
            <person name="Kurochkin I.V."/>
            <person name="Lareau L.F."/>
            <person name="Lazarevic D."/>
            <person name="Lipovich L."/>
            <person name="Liu J."/>
            <person name="Liuni S."/>
            <person name="McWilliam S."/>
            <person name="Madan Babu M."/>
            <person name="Madera M."/>
            <person name="Marchionni L."/>
            <person name="Matsuda H."/>
            <person name="Matsuzawa S."/>
            <person name="Miki H."/>
            <person name="Mignone F."/>
            <person name="Miyake S."/>
            <person name="Morris K."/>
            <person name="Mottagui-Tabar S."/>
            <person name="Mulder N."/>
            <person name="Nakano N."/>
            <person name="Nakauchi H."/>
            <person name="Ng P."/>
            <person name="Nilsson R."/>
            <person name="Nishiguchi S."/>
            <person name="Nishikawa S."/>
            <person name="Nori F."/>
            <person name="Ohara O."/>
            <person name="Okazaki Y."/>
            <person name="Orlando V."/>
            <person name="Pang K.C."/>
            <person name="Pavan W.J."/>
            <person name="Pavesi G."/>
            <person name="Pesole G."/>
            <person name="Petrovsky N."/>
            <person name="Piazza S."/>
            <person name="Reed J."/>
            <person name="Reid J.F."/>
            <person name="Ring B.Z."/>
            <person name="Ringwald M."/>
            <person name="Rost B."/>
            <person name="Ruan Y."/>
            <person name="Salzberg S.L."/>
            <person name="Sandelin A."/>
            <person name="Schneider C."/>
            <person name="Schoenbach C."/>
            <person name="Sekiguchi K."/>
            <person name="Semple C.A."/>
            <person name="Seno S."/>
            <person name="Sessa L."/>
            <person name="Sheng Y."/>
            <person name="Shibata Y."/>
            <person name="Shimada H."/>
            <person name="Shimada K."/>
            <person name="Silva D."/>
            <person name="Sinclair B."/>
            <person name="Sperling S."/>
            <person name="Stupka E."/>
            <person name="Sugiura K."/>
            <person name="Sultana R."/>
            <person name="Takenaka Y."/>
            <person name="Taki K."/>
            <person name="Tammoja K."/>
            <person name="Tan S.L."/>
            <person name="Tang S."/>
            <person name="Taylor M.S."/>
            <person name="Tegner J."/>
            <person name="Teichmann S.A."/>
            <person name="Ueda H.R."/>
            <person name="van Nimwegen E."/>
            <person name="Verardo R."/>
            <person name="Wei C.L."/>
            <person name="Yagi K."/>
            <person name="Yamanishi H."/>
            <person name="Zabarovsky E."/>
            <person name="Zhu S."/>
            <person name="Zimmer A."/>
            <person name="Hide W."/>
            <person name="Bult C."/>
            <person name="Grimmond S.M."/>
            <person name="Teasdale R.D."/>
            <person name="Liu E.T."/>
            <person name="Brusic V."/>
            <person name="Quackenbush J."/>
            <person name="Wahlestedt C."/>
            <person name="Mattick J.S."/>
            <person name="Hume D.A."/>
            <person name="Kai C."/>
            <person name="Sasaki D."/>
            <person name="Tomaru Y."/>
            <person name="Fukuda S."/>
            <person name="Kanamori-Katayama M."/>
            <person name="Suzuki M."/>
            <person name="Aoki J."/>
            <person name="Arakawa T."/>
            <person name="Iida J."/>
            <person name="Imamura K."/>
            <person name="Itoh M."/>
            <person name="Kato T."/>
            <person name="Kawaji H."/>
            <person name="Kawagashira N."/>
            <person name="Kawashima T."/>
            <person name="Kojima M."/>
            <person name="Kondo S."/>
            <person name="Konno H."/>
            <person name="Nakano K."/>
            <person name="Ninomiya N."/>
            <person name="Nishio T."/>
            <person name="Okada M."/>
            <person name="Plessy C."/>
            <person name="Shibata K."/>
            <person name="Shiraki T."/>
            <person name="Suzuki S."/>
            <person name="Tagami M."/>
            <person name="Waki K."/>
            <person name="Watahiki A."/>
            <person name="Okamura-Oho Y."/>
            <person name="Suzuki H."/>
            <person name="Kawai J."/>
            <person name="Hayashizaki Y."/>
        </authorList>
    </citation>
    <scope>NUCLEOTIDE SEQUENCE [LARGE SCALE MRNA] (ISOFORMS 1 AND 2)</scope>
    <scope>VARIANT GLN-GLY-PRO-GLY-ILE-166 INS</scope>
    <source>
        <strain>C57BL/6J</strain>
        <tissue>Brain cortex</tissue>
        <tissue>Embryo</tissue>
        <tissue>Inner ear</tissue>
        <tissue>Mammary gland</tissue>
        <tissue>Testis</tissue>
    </source>
</reference>
<reference key="3">
    <citation type="submission" date="2005-07" db="EMBL/GenBank/DDBJ databases">
        <title>Cloning of mouse full open reading frames in Gateway(R) system entry vector (pDONR201).</title>
        <authorList>
            <person name="Ebert L."/>
            <person name="Muenstermann E."/>
            <person name="Schatten R."/>
            <person name="Henze S."/>
            <person name="Bohn E."/>
            <person name="Mollenhauer J."/>
            <person name="Wiemann S."/>
            <person name="Schick M."/>
            <person name="Korn B."/>
        </authorList>
    </citation>
    <scope>NUCLEOTIDE SEQUENCE [LARGE SCALE MRNA] (ISOFORM 1)</scope>
</reference>
<reference key="4">
    <citation type="journal article" date="2004" name="Genome Res.">
        <title>The status, quality, and expansion of the NIH full-length cDNA project: the Mammalian Gene Collection (MGC).</title>
        <authorList>
            <consortium name="The MGC Project Team"/>
        </authorList>
    </citation>
    <scope>NUCLEOTIDE SEQUENCE [LARGE SCALE MRNA] (ISOFORM 1)</scope>
    <scope>VARIANT GLN-GLY-PRO-GLY-ILE-166 INS</scope>
    <source>
        <tissue>Mammary tumor</tissue>
    </source>
</reference>
<reference evidence="7" key="5">
    <citation type="journal article" date="2023" name="Cell">
        <title>Structures of sperm flagellar doublet microtubules expand the genetic spectrum of male infertility.</title>
        <authorList>
            <person name="Zhou L."/>
            <person name="Liu H."/>
            <person name="Liu S."/>
            <person name="Yang X."/>
            <person name="Dong Y."/>
            <person name="Pan Y."/>
            <person name="Xiao Z."/>
            <person name="Zheng B."/>
            <person name="Sun Y."/>
            <person name="Huang P."/>
            <person name="Zhang X."/>
            <person name="Hu J."/>
            <person name="Sun R."/>
            <person name="Feng S."/>
            <person name="Zhu Y."/>
            <person name="Liu M."/>
            <person name="Gui M."/>
            <person name="Wu J."/>
        </authorList>
    </citation>
    <scope>STRUCTURE BY ELECTRON MICROSCOPY (3.50 ANGSTROMS) OF SPERM FLAGELLAR DOUBLET MICROTUBULES</scope>
    <scope>FUNCTION</scope>
    <scope>SUBCELLULAR LOCATION</scope>
    <scope>SUBUNIT</scope>
</reference>
<feature type="chain" id="PRO_0000089830" description="Cilia- and flagella-associated protein 68">
    <location>
        <begin position="1"/>
        <end position="166"/>
    </location>
</feature>
<feature type="region of interest" description="Mn 1" evidence="1">
    <location>
        <begin position="98"/>
        <end position="109"/>
    </location>
</feature>
<feature type="region of interest" description="Mn 2" evidence="1">
    <location>
        <begin position="139"/>
        <end position="149"/>
    </location>
</feature>
<feature type="splice variant" id="VSP_027584" description="In isoform 2." evidence="5">
    <original>MAVSCSLNHSTYL</original>
    <variation>MELPYRNRFYSLRCSSKSLYSPSSYTSII</variation>
    <location>
        <begin position="1"/>
        <end position="13"/>
    </location>
</feature>
<feature type="sequence variant" evidence="2 3">
    <original>S</original>
    <variation>SQGPGI</variation>
    <location>
        <position position="166"/>
    </location>
</feature>
<feature type="sequence conflict" description="In Ref. 1; CAB96546 and 2; BAE34519." evidence="6" ref="1 2">
    <original>N</original>
    <variation>S</variation>
    <location>
        <position position="8"/>
    </location>
</feature>
<feature type="sequence conflict" description="In Ref. 1; CAB96546 and 2; BAE34519." evidence="6" ref="1 2">
    <original>Q</original>
    <variation>K</variation>
    <location>
        <position position="14"/>
    </location>
</feature>
<feature type="sequence conflict" description="In Ref. 4; BC032012." evidence="6" ref="4">
    <original>V</original>
    <variation>I</variation>
    <location>
        <position position="158"/>
    </location>
</feature>
<keyword id="KW-0002">3D-structure</keyword>
<keyword id="KW-0025">Alternative splicing</keyword>
<keyword id="KW-0966">Cell projection</keyword>
<keyword id="KW-0969">Cilium</keyword>
<keyword id="KW-0963">Cytoplasm</keyword>
<keyword id="KW-0206">Cytoskeleton</keyword>
<keyword id="KW-0282">Flagellum</keyword>
<keyword id="KW-0539">Nucleus</keyword>
<keyword id="KW-1185">Reference proteome</keyword>
<evidence type="ECO:0000250" key="1">
    <source>
        <dbReference type="UniProtKB" id="Q9H5F2"/>
    </source>
</evidence>
<evidence type="ECO:0000269" key="2">
    <source>
    </source>
</evidence>
<evidence type="ECO:0000269" key="3">
    <source>
    </source>
</evidence>
<evidence type="ECO:0000269" key="4">
    <source>
    </source>
</evidence>
<evidence type="ECO:0000303" key="5">
    <source>
    </source>
</evidence>
<evidence type="ECO:0000305" key="6"/>
<evidence type="ECO:0007744" key="7">
    <source>
        <dbReference type="PDB" id="8IYJ"/>
    </source>
</evidence>
<organism>
    <name type="scientific">Mus musculus</name>
    <name type="common">Mouse</name>
    <dbReference type="NCBI Taxonomy" id="10090"/>
    <lineage>
        <taxon>Eukaryota</taxon>
        <taxon>Metazoa</taxon>
        <taxon>Chordata</taxon>
        <taxon>Craniata</taxon>
        <taxon>Vertebrata</taxon>
        <taxon>Euteleostomi</taxon>
        <taxon>Mammalia</taxon>
        <taxon>Eutheria</taxon>
        <taxon>Euarchontoglires</taxon>
        <taxon>Glires</taxon>
        <taxon>Rodentia</taxon>
        <taxon>Myomorpha</taxon>
        <taxon>Muroidea</taxon>
        <taxon>Muridae</taxon>
        <taxon>Murinae</taxon>
        <taxon>Mus</taxon>
        <taxon>Mus</taxon>
    </lineage>
</organism>
<protein>
    <recommendedName>
        <fullName>Cilia- and flagella-associated protein 68</fullName>
    </recommendedName>
</protein>